<sequence>MDDLHGSNARMHIREAQDPMHVQFEHHALHHIHNGSGMVDDQADDGNAGGMSEGVETDIPSHPGNVTDNRGEVVDRGSEQGDQLTLSFQGQVYVFDSVLPEKVQAVLLLLGGRELPQAAPPGLGSPHQNNRVSSLPGTPQRFSIPQRLASLVRFREKRKGRNFDKKIRYTVRKEVALRMQRNKGQFTSAKSNNDEAASAGSSWGSNQTWAIESSEAQHQEISCRHCGIGEKSTPMMRRGPAGPRTLCNACGLMWANKGAFRDLSKASPQTAQNLPLNKNEDANLETDHQIMITVANDISNSQ</sequence>
<proteinExistence type="evidence at protein level"/>
<keyword id="KW-0010">Activator</keyword>
<keyword id="KW-0238">DNA-binding</keyword>
<keyword id="KW-0479">Metal-binding</keyword>
<keyword id="KW-0539">Nucleus</keyword>
<keyword id="KW-1185">Reference proteome</keyword>
<keyword id="KW-0804">Transcription</keyword>
<keyword id="KW-0805">Transcription regulation</keyword>
<keyword id="KW-0862">Zinc</keyword>
<keyword id="KW-0863">Zinc-finger</keyword>
<accession>Q8H1G0</accession>
<accession>Q94AN8</accession>
<accession>Q9C541</accession>
<protein>
    <recommendedName>
        <fullName>GATA transcription factor 28</fullName>
    </recommendedName>
    <alternativeName>
        <fullName>Protein TIFY 2A</fullName>
    </alternativeName>
    <alternativeName>
        <fullName>ZIM-like 2 protein</fullName>
    </alternativeName>
</protein>
<name>GAT28_ARATH</name>
<gene>
    <name type="primary">GATA28</name>
    <name type="synonym">TIFY2A</name>
    <name type="synonym">ZML2</name>
    <name type="ordered locus">At1g51600</name>
    <name type="ORF">F19C24.17</name>
    <name type="ORF">F5D21.22</name>
</gene>
<evidence type="ECO:0000250" key="1"/>
<evidence type="ECO:0000255" key="2">
    <source>
        <dbReference type="PROSITE-ProRule" id="PRU00094"/>
    </source>
</evidence>
<evidence type="ECO:0000255" key="3">
    <source>
        <dbReference type="PROSITE-ProRule" id="PRU00357"/>
    </source>
</evidence>
<evidence type="ECO:0000255" key="4">
    <source>
        <dbReference type="PROSITE-ProRule" id="PRU00650"/>
    </source>
</evidence>
<evidence type="ECO:0000256" key="5">
    <source>
        <dbReference type="SAM" id="MobiDB-lite"/>
    </source>
</evidence>
<evidence type="ECO:0000269" key="6">
    <source>
    </source>
</evidence>
<evidence type="ECO:0000305" key="7"/>
<dbReference type="EMBL" id="AB119061">
    <property type="protein sequence ID" value="BAD02931.1"/>
    <property type="molecule type" value="mRNA"/>
</dbReference>
<dbReference type="EMBL" id="AC024261">
    <property type="protein sequence ID" value="AAG52620.1"/>
    <property type="status" value="ALT_SEQ"/>
    <property type="molecule type" value="Genomic_DNA"/>
</dbReference>
<dbReference type="EMBL" id="AC025294">
    <property type="protein sequence ID" value="AAG50873.1"/>
    <property type="status" value="ALT_SEQ"/>
    <property type="molecule type" value="Genomic_DNA"/>
</dbReference>
<dbReference type="EMBL" id="CP002684">
    <property type="protein sequence ID" value="AEE32688.1"/>
    <property type="molecule type" value="Genomic_DNA"/>
</dbReference>
<dbReference type="EMBL" id="CP002684">
    <property type="protein sequence ID" value="AEE32689.1"/>
    <property type="molecule type" value="Genomic_DNA"/>
</dbReference>
<dbReference type="EMBL" id="AY045906">
    <property type="protein sequence ID" value="AAK76580.1"/>
    <property type="molecule type" value="mRNA"/>
</dbReference>
<dbReference type="EMBL" id="AY150395">
    <property type="protein sequence ID" value="AAN12940.1"/>
    <property type="molecule type" value="mRNA"/>
</dbReference>
<dbReference type="PIR" id="F96554">
    <property type="entry name" value="F96554"/>
</dbReference>
<dbReference type="RefSeq" id="NP_564593.1">
    <property type="nucleotide sequence ID" value="NM_104038.4"/>
</dbReference>
<dbReference type="RefSeq" id="NP_974002.1">
    <property type="nucleotide sequence ID" value="NM_202273.3"/>
</dbReference>
<dbReference type="SMR" id="Q8H1G0"/>
<dbReference type="BioGRID" id="26810">
    <property type="interactions" value="40"/>
</dbReference>
<dbReference type="FunCoup" id="Q8H1G0">
    <property type="interactions" value="1960"/>
</dbReference>
<dbReference type="IntAct" id="Q8H1G0">
    <property type="interactions" value="43"/>
</dbReference>
<dbReference type="STRING" id="3702.Q8H1G0"/>
<dbReference type="iPTMnet" id="Q8H1G0"/>
<dbReference type="PaxDb" id="3702-AT1G51600.1"/>
<dbReference type="ProteomicsDB" id="230482"/>
<dbReference type="EnsemblPlants" id="AT1G51600.1">
    <property type="protein sequence ID" value="AT1G51600.1"/>
    <property type="gene ID" value="AT1G51600"/>
</dbReference>
<dbReference type="EnsemblPlants" id="AT1G51600.2">
    <property type="protein sequence ID" value="AT1G51600.2"/>
    <property type="gene ID" value="AT1G51600"/>
</dbReference>
<dbReference type="GeneID" id="841585"/>
<dbReference type="Gramene" id="AT1G51600.1">
    <property type="protein sequence ID" value="AT1G51600.1"/>
    <property type="gene ID" value="AT1G51600"/>
</dbReference>
<dbReference type="Gramene" id="AT1G51600.2">
    <property type="protein sequence ID" value="AT1G51600.2"/>
    <property type="gene ID" value="AT1G51600"/>
</dbReference>
<dbReference type="KEGG" id="ath:AT1G51600"/>
<dbReference type="Araport" id="AT1G51600"/>
<dbReference type="TAIR" id="AT1G51600">
    <property type="gene designation" value="ZML2"/>
</dbReference>
<dbReference type="eggNOG" id="KOG1601">
    <property type="taxonomic scope" value="Eukaryota"/>
</dbReference>
<dbReference type="HOGENOM" id="CLU_057264_0_1_1"/>
<dbReference type="InParanoid" id="Q8H1G0"/>
<dbReference type="OMA" id="EAQDPMH"/>
<dbReference type="PhylomeDB" id="Q8H1G0"/>
<dbReference type="PRO" id="PR:Q8H1G0"/>
<dbReference type="Proteomes" id="UP000006548">
    <property type="component" value="Chromosome 1"/>
</dbReference>
<dbReference type="ExpressionAtlas" id="Q8H1G0">
    <property type="expression patterns" value="baseline and differential"/>
</dbReference>
<dbReference type="GO" id="GO:0005634">
    <property type="term" value="C:nucleus"/>
    <property type="evidence" value="ECO:0007669"/>
    <property type="project" value="UniProtKB-SubCell"/>
</dbReference>
<dbReference type="GO" id="GO:0042802">
    <property type="term" value="F:identical protein binding"/>
    <property type="evidence" value="ECO:0000353"/>
    <property type="project" value="IntAct"/>
</dbReference>
<dbReference type="GO" id="GO:0000976">
    <property type="term" value="F:transcription cis-regulatory region binding"/>
    <property type="evidence" value="ECO:0000353"/>
    <property type="project" value="TAIR"/>
</dbReference>
<dbReference type="GO" id="GO:0008270">
    <property type="term" value="F:zinc ion binding"/>
    <property type="evidence" value="ECO:0007669"/>
    <property type="project" value="UniProtKB-KW"/>
</dbReference>
<dbReference type="GO" id="GO:0006355">
    <property type="term" value="P:regulation of DNA-templated transcription"/>
    <property type="evidence" value="ECO:0007669"/>
    <property type="project" value="InterPro"/>
</dbReference>
<dbReference type="CDD" id="cd00202">
    <property type="entry name" value="ZnF_GATA"/>
    <property type="match status" value="1"/>
</dbReference>
<dbReference type="Gene3D" id="3.30.50.10">
    <property type="entry name" value="Erythroid Transcription Factor GATA-1, subunit A"/>
    <property type="match status" value="1"/>
</dbReference>
<dbReference type="InterPro" id="IPR010402">
    <property type="entry name" value="CCT_domain"/>
</dbReference>
<dbReference type="InterPro" id="IPR045280">
    <property type="entry name" value="TIFY-like"/>
</dbReference>
<dbReference type="InterPro" id="IPR010399">
    <property type="entry name" value="Tify_dom"/>
</dbReference>
<dbReference type="InterPro" id="IPR000679">
    <property type="entry name" value="Znf_GATA"/>
</dbReference>
<dbReference type="InterPro" id="IPR013088">
    <property type="entry name" value="Znf_NHR/GATA"/>
</dbReference>
<dbReference type="PANTHER" id="PTHR46125">
    <property type="entry name" value="GATA TRANSCRIPTION FACTOR 28"/>
    <property type="match status" value="1"/>
</dbReference>
<dbReference type="PANTHER" id="PTHR46125:SF27">
    <property type="entry name" value="GATA TRANSCRIPTION FACTOR 28"/>
    <property type="match status" value="1"/>
</dbReference>
<dbReference type="Pfam" id="PF06203">
    <property type="entry name" value="CCT"/>
    <property type="match status" value="1"/>
</dbReference>
<dbReference type="Pfam" id="PF00320">
    <property type="entry name" value="GATA"/>
    <property type="match status" value="1"/>
</dbReference>
<dbReference type="Pfam" id="PF06200">
    <property type="entry name" value="tify"/>
    <property type="match status" value="1"/>
</dbReference>
<dbReference type="SMART" id="SM00979">
    <property type="entry name" value="TIFY"/>
    <property type="match status" value="1"/>
</dbReference>
<dbReference type="SMART" id="SM00401">
    <property type="entry name" value="ZnF_GATA"/>
    <property type="match status" value="1"/>
</dbReference>
<dbReference type="SUPFAM" id="SSF57716">
    <property type="entry name" value="Glucocorticoid receptor-like (DNA-binding domain)"/>
    <property type="match status" value="1"/>
</dbReference>
<dbReference type="PROSITE" id="PS51017">
    <property type="entry name" value="CCT"/>
    <property type="match status" value="1"/>
</dbReference>
<dbReference type="PROSITE" id="PS00344">
    <property type="entry name" value="GATA_ZN_FINGER_1"/>
    <property type="match status" value="1"/>
</dbReference>
<dbReference type="PROSITE" id="PS50114">
    <property type="entry name" value="GATA_ZN_FINGER_2"/>
    <property type="match status" value="1"/>
</dbReference>
<dbReference type="PROSITE" id="PS51320">
    <property type="entry name" value="TIFY"/>
    <property type="match status" value="1"/>
</dbReference>
<organism>
    <name type="scientific">Arabidopsis thaliana</name>
    <name type="common">Mouse-ear cress</name>
    <dbReference type="NCBI Taxonomy" id="3702"/>
    <lineage>
        <taxon>Eukaryota</taxon>
        <taxon>Viridiplantae</taxon>
        <taxon>Streptophyta</taxon>
        <taxon>Embryophyta</taxon>
        <taxon>Tracheophyta</taxon>
        <taxon>Spermatophyta</taxon>
        <taxon>Magnoliopsida</taxon>
        <taxon>eudicotyledons</taxon>
        <taxon>Gunneridae</taxon>
        <taxon>Pentapetalae</taxon>
        <taxon>rosids</taxon>
        <taxon>malvids</taxon>
        <taxon>Brassicales</taxon>
        <taxon>Brassicaceae</taxon>
        <taxon>Camelineae</taxon>
        <taxon>Arabidopsis</taxon>
    </lineage>
</organism>
<comment type="function">
    <text evidence="1 6">Transcriptional activator that specifically binds 5'-GATA-3' or 5'-GAT-3' motifs within gene promoters.</text>
</comment>
<comment type="interaction">
    <interactant intactId="EBI-4435064">
        <id>Q8H1G0</id>
    </interactant>
    <interactant intactId="EBI-4425980">
        <id>Q9SGA0</id>
        <label>ACR6</label>
    </interactant>
    <organismsDiffer>false</organismsDiffer>
    <experiments>4</experiments>
</comment>
<comment type="interaction">
    <interactant intactId="EBI-4435064">
        <id>Q8H1G0</id>
    </interactant>
    <interactant intactId="EBI-4429615">
        <id>Q9M2H8</id>
        <label>At3g58380</label>
    </interactant>
    <organismsDiffer>false</organismsDiffer>
    <experiments>3</experiments>
</comment>
<comment type="interaction">
    <interactant intactId="EBI-4435064">
        <id>Q8H1G0</id>
    </interactant>
    <interactant intactId="EBI-15192535">
        <id>F4JI72</id>
        <label>At4g03250</label>
    </interactant>
    <organismsDiffer>false</organismsDiffer>
    <experiments>3</experiments>
</comment>
<comment type="interaction">
    <interactant intactId="EBI-4435064">
        <id>Q8H1G0</id>
    </interactant>
    <interactant intactId="EBI-25520453">
        <id>A0A178WEI8</id>
        <label>AXX17_At1g48850</label>
    </interactant>
    <organismsDiffer>false</organismsDiffer>
    <experiments>3</experiments>
</comment>
<comment type="interaction">
    <interactant intactId="EBI-4435064">
        <id>Q8H1G0</id>
    </interactant>
    <interactant intactId="EBI-15191793">
        <id>O82617</id>
        <label>BBX23</label>
    </interactant>
    <organismsDiffer>false</organismsDiffer>
    <experiments>4</experiments>
</comment>
<comment type="interaction">
    <interactant intactId="EBI-4435064">
        <id>Q8H1G0</id>
    </interactant>
    <interactant intactId="EBI-4434261">
        <id>Q9LNJ5</id>
        <label>BHLH13</label>
    </interactant>
    <organismsDiffer>false</organismsDiffer>
    <experiments>6</experiments>
</comment>
<comment type="interaction">
    <interactant intactId="EBI-4435064">
        <id>Q8H1G0</id>
    </interactant>
    <interactant intactId="EBI-780656">
        <id>O22265</id>
        <label>CAO</label>
    </interactant>
    <organismsDiffer>false</organismsDiffer>
    <experiments>4</experiments>
</comment>
<comment type="interaction">
    <interactant intactId="EBI-4435064">
        <id>Q8H1G0</id>
    </interactant>
    <interactant intactId="EBI-4442347">
        <id>Q93Z18</id>
        <label>CKL3</label>
    </interactant>
    <organismsDiffer>false</organismsDiffer>
    <experiments>3</experiments>
</comment>
<comment type="interaction">
    <interactant intactId="EBI-4435064">
        <id>Q8H1G0</id>
    </interactant>
    <interactant intactId="EBI-25511123">
        <id>Q9ZT70</id>
        <label>F9H3.4</label>
    </interactant>
    <organismsDiffer>false</organismsDiffer>
    <experiments>4</experiments>
</comment>
<comment type="interaction">
    <interactant intactId="EBI-4435064">
        <id>Q8H1G0</id>
    </interactant>
    <interactant intactId="EBI-4448729">
        <id>Q9ZVC9</id>
        <label>FRS3</label>
    </interactant>
    <organismsDiffer>false</organismsDiffer>
    <experiments>4</experiments>
</comment>
<comment type="interaction">
    <interactant intactId="EBI-4435064">
        <id>Q8H1G0</id>
    </interactant>
    <interactant intactId="EBI-4426127">
        <id>Q8GXL7</id>
        <label>GATA24</label>
    </interactant>
    <organismsDiffer>false</organismsDiffer>
    <experiments>9</experiments>
</comment>
<comment type="interaction">
    <interactant intactId="EBI-4435064">
        <id>Q8H1G0</id>
    </interactant>
    <interactant intactId="EBI-2460434">
        <id>Q9LRH6</id>
        <label>GATA25</label>
    </interactant>
    <organismsDiffer>false</organismsDiffer>
    <experiments>9</experiments>
</comment>
<comment type="interaction">
    <interactant intactId="EBI-4435064">
        <id>Q8H1G0</id>
    </interactant>
    <interactant intactId="EBI-4435064">
        <id>Q8H1G0</id>
        <label>GATA28</label>
    </interactant>
    <organismsDiffer>false</organismsDiffer>
    <experiments>3</experiments>
</comment>
<comment type="interaction">
    <interactant intactId="EBI-4435064">
        <id>Q8H1G0</id>
    </interactant>
    <interactant intactId="EBI-2466050">
        <id>Q8L4B2</id>
        <label>NFYC9</label>
    </interactant>
    <organismsDiffer>false</organismsDiffer>
    <experiments>3</experiments>
</comment>
<comment type="interaction">
    <interactant intactId="EBI-4435064">
        <id>Q8H1G0</id>
    </interactant>
    <interactant intactId="EBI-15204858">
        <id>Q9FMC8</id>
        <label>OFP13</label>
    </interactant>
    <organismsDiffer>false</organismsDiffer>
    <experiments>4</experiments>
</comment>
<comment type="interaction">
    <interactant intactId="EBI-4435064">
        <id>Q8H1G0</id>
    </interactant>
    <interactant intactId="EBI-1238472">
        <id>Q9S7H5</id>
        <label>SCL21</label>
    </interactant>
    <organismsDiffer>false</organismsDiffer>
    <experiments>3</experiments>
</comment>
<comment type="interaction">
    <interactant intactId="EBI-4435064">
        <id>Q8H1G0</id>
    </interactant>
    <interactant intactId="EBI-4452426">
        <id>Q9FEE2</id>
        <label>TON2</label>
    </interactant>
    <organismsDiffer>false</organismsDiffer>
    <experiments>3</experiments>
</comment>
<comment type="subcellular location">
    <subcellularLocation>
        <location evidence="7">Nucleus</location>
    </subcellularLocation>
</comment>
<comment type="tissue specificity">
    <text evidence="6">Predominantly expressed in shoot apices, inflorescences and roots.</text>
</comment>
<comment type="similarity">
    <text evidence="7">Belongs to the type IV zinc-finger family. Class C subfamily.</text>
</comment>
<comment type="sequence caution" evidence="7">
    <conflict type="erroneous gene model prediction">
        <sequence resource="EMBL-CDS" id="AAG50873"/>
    </conflict>
</comment>
<comment type="sequence caution" evidence="7">
    <conflict type="erroneous gene model prediction">
        <sequence resource="EMBL-CDS" id="AAG52620"/>
    </conflict>
</comment>
<reference key="1">
    <citation type="journal article" date="2003" name="Biosci. Biotechnol. Biochem.">
        <title>Arabidopsis ZIM, a plant-specific GATA factor, can function as a transcriptional activator.</title>
        <authorList>
            <person name="Shikata M."/>
            <person name="Takemura M."/>
            <person name="Yokota A."/>
            <person name="Kohchi T."/>
        </authorList>
    </citation>
    <scope>NUCLEOTIDE SEQUENCE [MRNA]</scope>
</reference>
<reference key="2">
    <citation type="journal article" date="2000" name="Nature">
        <title>Sequence and analysis of chromosome 1 of the plant Arabidopsis thaliana.</title>
        <authorList>
            <person name="Theologis A."/>
            <person name="Ecker J.R."/>
            <person name="Palm C.J."/>
            <person name="Federspiel N.A."/>
            <person name="Kaul S."/>
            <person name="White O."/>
            <person name="Alonso J."/>
            <person name="Altafi H."/>
            <person name="Araujo R."/>
            <person name="Bowman C.L."/>
            <person name="Brooks S.Y."/>
            <person name="Buehler E."/>
            <person name="Chan A."/>
            <person name="Chao Q."/>
            <person name="Chen H."/>
            <person name="Cheuk R.F."/>
            <person name="Chin C.W."/>
            <person name="Chung M.K."/>
            <person name="Conn L."/>
            <person name="Conway A.B."/>
            <person name="Conway A.R."/>
            <person name="Creasy T.H."/>
            <person name="Dewar K."/>
            <person name="Dunn P."/>
            <person name="Etgu P."/>
            <person name="Feldblyum T.V."/>
            <person name="Feng J.-D."/>
            <person name="Fong B."/>
            <person name="Fujii C.Y."/>
            <person name="Gill J.E."/>
            <person name="Goldsmith A.D."/>
            <person name="Haas B."/>
            <person name="Hansen N.F."/>
            <person name="Hughes B."/>
            <person name="Huizar L."/>
            <person name="Hunter J.L."/>
            <person name="Jenkins J."/>
            <person name="Johnson-Hopson C."/>
            <person name="Khan S."/>
            <person name="Khaykin E."/>
            <person name="Kim C.J."/>
            <person name="Koo H.L."/>
            <person name="Kremenetskaia I."/>
            <person name="Kurtz D.B."/>
            <person name="Kwan A."/>
            <person name="Lam B."/>
            <person name="Langin-Hooper S."/>
            <person name="Lee A."/>
            <person name="Lee J.M."/>
            <person name="Lenz C.A."/>
            <person name="Li J.H."/>
            <person name="Li Y.-P."/>
            <person name="Lin X."/>
            <person name="Liu S.X."/>
            <person name="Liu Z.A."/>
            <person name="Luros J.S."/>
            <person name="Maiti R."/>
            <person name="Marziali A."/>
            <person name="Militscher J."/>
            <person name="Miranda M."/>
            <person name="Nguyen M."/>
            <person name="Nierman W.C."/>
            <person name="Osborne B.I."/>
            <person name="Pai G."/>
            <person name="Peterson J."/>
            <person name="Pham P.K."/>
            <person name="Rizzo M."/>
            <person name="Rooney T."/>
            <person name="Rowley D."/>
            <person name="Sakano H."/>
            <person name="Salzberg S.L."/>
            <person name="Schwartz J.R."/>
            <person name="Shinn P."/>
            <person name="Southwick A.M."/>
            <person name="Sun H."/>
            <person name="Tallon L.J."/>
            <person name="Tambunga G."/>
            <person name="Toriumi M.J."/>
            <person name="Town C.D."/>
            <person name="Utterback T."/>
            <person name="Van Aken S."/>
            <person name="Vaysberg M."/>
            <person name="Vysotskaia V.S."/>
            <person name="Walker M."/>
            <person name="Wu D."/>
            <person name="Yu G."/>
            <person name="Fraser C.M."/>
            <person name="Venter J.C."/>
            <person name="Davis R.W."/>
        </authorList>
    </citation>
    <scope>NUCLEOTIDE SEQUENCE [LARGE SCALE GENOMIC DNA]</scope>
    <source>
        <strain>cv. Columbia</strain>
    </source>
</reference>
<reference key="3">
    <citation type="journal article" date="2017" name="Plant J.">
        <title>Araport11: a complete reannotation of the Arabidopsis thaliana reference genome.</title>
        <authorList>
            <person name="Cheng C.Y."/>
            <person name="Krishnakumar V."/>
            <person name="Chan A.P."/>
            <person name="Thibaud-Nissen F."/>
            <person name="Schobel S."/>
            <person name="Town C.D."/>
        </authorList>
    </citation>
    <scope>GENOME REANNOTATION</scope>
    <source>
        <strain>cv. Columbia</strain>
    </source>
</reference>
<reference key="4">
    <citation type="journal article" date="2003" name="Science">
        <title>Empirical analysis of transcriptional activity in the Arabidopsis genome.</title>
        <authorList>
            <person name="Yamada K."/>
            <person name="Lim J."/>
            <person name="Dale J.M."/>
            <person name="Chen H."/>
            <person name="Shinn P."/>
            <person name="Palm C.J."/>
            <person name="Southwick A.M."/>
            <person name="Wu H.C."/>
            <person name="Kim C.J."/>
            <person name="Nguyen M."/>
            <person name="Pham P.K."/>
            <person name="Cheuk R.F."/>
            <person name="Karlin-Newmann G."/>
            <person name="Liu S.X."/>
            <person name="Lam B."/>
            <person name="Sakano H."/>
            <person name="Wu T."/>
            <person name="Yu G."/>
            <person name="Miranda M."/>
            <person name="Quach H.L."/>
            <person name="Tripp M."/>
            <person name="Chang C.H."/>
            <person name="Lee J.M."/>
            <person name="Toriumi M.J."/>
            <person name="Chan M.M."/>
            <person name="Tang C.C."/>
            <person name="Onodera C.S."/>
            <person name="Deng J.M."/>
            <person name="Akiyama K."/>
            <person name="Ansari Y."/>
            <person name="Arakawa T."/>
            <person name="Banh J."/>
            <person name="Banno F."/>
            <person name="Bowser L."/>
            <person name="Brooks S.Y."/>
            <person name="Carninci P."/>
            <person name="Chao Q."/>
            <person name="Choy N."/>
            <person name="Enju A."/>
            <person name="Goldsmith A.D."/>
            <person name="Gurjal M."/>
            <person name="Hansen N.F."/>
            <person name="Hayashizaki Y."/>
            <person name="Johnson-Hopson C."/>
            <person name="Hsuan V.W."/>
            <person name="Iida K."/>
            <person name="Karnes M."/>
            <person name="Khan S."/>
            <person name="Koesema E."/>
            <person name="Ishida J."/>
            <person name="Jiang P.X."/>
            <person name="Jones T."/>
            <person name="Kawai J."/>
            <person name="Kamiya A."/>
            <person name="Meyers C."/>
            <person name="Nakajima M."/>
            <person name="Narusaka M."/>
            <person name="Seki M."/>
            <person name="Sakurai T."/>
            <person name="Satou M."/>
            <person name="Tamse R."/>
            <person name="Vaysberg M."/>
            <person name="Wallender E.K."/>
            <person name="Wong C."/>
            <person name="Yamamura Y."/>
            <person name="Yuan S."/>
            <person name="Shinozaki K."/>
            <person name="Davis R.W."/>
            <person name="Theologis A."/>
            <person name="Ecker J.R."/>
        </authorList>
    </citation>
    <scope>NUCLEOTIDE SEQUENCE [LARGE SCALE MRNA]</scope>
    <source>
        <strain>cv. Columbia</strain>
    </source>
</reference>
<reference key="5">
    <citation type="journal article" date="2004" name="J. Exp. Bot.">
        <title>Characterization of Arabidopsis ZIM, a member of a novel plant-specific GATA factor gene family.</title>
        <authorList>
            <person name="Shikata M."/>
            <person name="Matsuda Y."/>
            <person name="Ando K."/>
            <person name="Nishii A."/>
            <person name="Takemura M."/>
            <person name="Yokota A."/>
            <person name="Kohchi T."/>
        </authorList>
    </citation>
    <scope>FUNCTION</scope>
    <scope>TISSUE SPECIFICITY</scope>
</reference>
<reference key="6">
    <citation type="journal article" date="2004" name="Plant Physiol.">
        <title>The GATA family of transcription factors in Arabidopsis and rice.</title>
        <authorList>
            <person name="Reyes J.C."/>
            <person name="Muro-Pastor M.I."/>
            <person name="Florencio F.J."/>
        </authorList>
    </citation>
    <scope>GENE FAMILY ORGANIZATION</scope>
</reference>
<reference key="7">
    <citation type="journal article" date="2007" name="Trends Plant Sci.">
        <title>The tify family previously known as ZIM.</title>
        <authorList>
            <person name="Vanholme B."/>
            <person name="Grunewald W."/>
            <person name="Bateman A."/>
            <person name="Kohchi T."/>
            <person name="Gheysen G."/>
        </authorList>
    </citation>
    <scope>GENE FAMILY</scope>
    <scope>NOMENCLATURE</scope>
</reference>
<feature type="chain" id="PRO_0000083454" description="GATA transcription factor 28">
    <location>
        <begin position="1"/>
        <end position="302"/>
    </location>
</feature>
<feature type="domain" description="Tify" evidence="4">
    <location>
        <begin position="77"/>
        <end position="112"/>
    </location>
</feature>
<feature type="domain" description="CCT" evidence="3">
    <location>
        <begin position="147"/>
        <end position="189"/>
    </location>
</feature>
<feature type="zinc finger region" description="GATA-type" evidence="2">
    <location>
        <begin position="217"/>
        <end position="273"/>
    </location>
</feature>
<feature type="region of interest" description="Disordered" evidence="5">
    <location>
        <begin position="47"/>
        <end position="66"/>
    </location>
</feature>
<feature type="region of interest" description="Disordered" evidence="5">
    <location>
        <begin position="119"/>
        <end position="141"/>
    </location>
</feature>
<feature type="compositionally biased region" description="Polar residues" evidence="5">
    <location>
        <begin position="126"/>
        <end position="141"/>
    </location>
</feature>
<feature type="sequence conflict" description="In Ref. 4; AAK76580." evidence="7" ref="4">
    <original>D</original>
    <variation>G</variation>
    <location>
        <position position="164"/>
    </location>
</feature>